<proteinExistence type="inferred from homology"/>
<name>RR19_CHAGL</name>
<comment type="function">
    <text evidence="1">Protein S19 forms a complex with S13 that binds strongly to the 16S ribosomal RNA.</text>
</comment>
<comment type="subcellular location">
    <subcellularLocation>
        <location>Plastid</location>
        <location>Chloroplast</location>
    </subcellularLocation>
</comment>
<comment type="similarity">
    <text evidence="1">Belongs to the universal ribosomal protein uS19 family.</text>
</comment>
<accession>Q8M9U8</accession>
<dbReference type="EMBL" id="AF494278">
    <property type="protein sequence ID" value="AAM96574.1"/>
    <property type="molecule type" value="Genomic_DNA"/>
</dbReference>
<dbReference type="RefSeq" id="NP_683842.1">
    <property type="nucleotide sequence ID" value="NC_004115.1"/>
</dbReference>
<dbReference type="SMR" id="Q8M9U8"/>
<dbReference type="GeneID" id="860730"/>
<dbReference type="GO" id="GO:0009507">
    <property type="term" value="C:chloroplast"/>
    <property type="evidence" value="ECO:0007669"/>
    <property type="project" value="UniProtKB-SubCell"/>
</dbReference>
<dbReference type="GO" id="GO:0005763">
    <property type="term" value="C:mitochondrial small ribosomal subunit"/>
    <property type="evidence" value="ECO:0007669"/>
    <property type="project" value="TreeGrafter"/>
</dbReference>
<dbReference type="GO" id="GO:0019843">
    <property type="term" value="F:rRNA binding"/>
    <property type="evidence" value="ECO:0007669"/>
    <property type="project" value="UniProtKB-UniRule"/>
</dbReference>
<dbReference type="GO" id="GO:0003735">
    <property type="term" value="F:structural constituent of ribosome"/>
    <property type="evidence" value="ECO:0007669"/>
    <property type="project" value="InterPro"/>
</dbReference>
<dbReference type="GO" id="GO:0000028">
    <property type="term" value="P:ribosomal small subunit assembly"/>
    <property type="evidence" value="ECO:0007669"/>
    <property type="project" value="TreeGrafter"/>
</dbReference>
<dbReference type="GO" id="GO:0006412">
    <property type="term" value="P:translation"/>
    <property type="evidence" value="ECO:0007669"/>
    <property type="project" value="UniProtKB-UniRule"/>
</dbReference>
<dbReference type="FunFam" id="3.30.860.10:FF:000001">
    <property type="entry name" value="30S ribosomal protein S19"/>
    <property type="match status" value="1"/>
</dbReference>
<dbReference type="Gene3D" id="3.30.860.10">
    <property type="entry name" value="30s Ribosomal Protein S19, Chain A"/>
    <property type="match status" value="1"/>
</dbReference>
<dbReference type="HAMAP" id="MF_00531">
    <property type="entry name" value="Ribosomal_uS19"/>
    <property type="match status" value="1"/>
</dbReference>
<dbReference type="InterPro" id="IPR002222">
    <property type="entry name" value="Ribosomal_uS19"/>
</dbReference>
<dbReference type="InterPro" id="IPR005732">
    <property type="entry name" value="Ribosomal_uS19_bac-type"/>
</dbReference>
<dbReference type="InterPro" id="IPR020934">
    <property type="entry name" value="Ribosomal_uS19_CS"/>
</dbReference>
<dbReference type="InterPro" id="IPR023575">
    <property type="entry name" value="Ribosomal_uS19_SF"/>
</dbReference>
<dbReference type="NCBIfam" id="TIGR01050">
    <property type="entry name" value="rpsS_bact"/>
    <property type="match status" value="1"/>
</dbReference>
<dbReference type="PANTHER" id="PTHR11880">
    <property type="entry name" value="RIBOSOMAL PROTEIN S19P FAMILY MEMBER"/>
    <property type="match status" value="1"/>
</dbReference>
<dbReference type="PANTHER" id="PTHR11880:SF8">
    <property type="entry name" value="SMALL RIBOSOMAL SUBUNIT PROTEIN US19M"/>
    <property type="match status" value="1"/>
</dbReference>
<dbReference type="Pfam" id="PF00203">
    <property type="entry name" value="Ribosomal_S19"/>
    <property type="match status" value="1"/>
</dbReference>
<dbReference type="PIRSF" id="PIRSF002144">
    <property type="entry name" value="Ribosomal_S19"/>
    <property type="match status" value="1"/>
</dbReference>
<dbReference type="PRINTS" id="PR00975">
    <property type="entry name" value="RIBOSOMALS19"/>
</dbReference>
<dbReference type="SUPFAM" id="SSF54570">
    <property type="entry name" value="Ribosomal protein S19"/>
    <property type="match status" value="1"/>
</dbReference>
<dbReference type="PROSITE" id="PS00323">
    <property type="entry name" value="RIBOSOMAL_S19"/>
    <property type="match status" value="1"/>
</dbReference>
<reference key="1">
    <citation type="journal article" date="2002" name="Proc. Natl. Acad. Sci. U.S.A.">
        <title>The chloroplast and mitochondrial genome sequences of the charophyte Chaetosphaeridium globosum: insights into the timing of the events that restructured organelle DNAs within the green algal lineage that led to land plants.</title>
        <authorList>
            <person name="Turmel M."/>
            <person name="Otis C."/>
            <person name="Lemieux C."/>
        </authorList>
    </citation>
    <scope>NUCLEOTIDE SEQUENCE [LARGE SCALE GENOMIC DNA]</scope>
    <source>
        <strain>M1311</strain>
    </source>
</reference>
<sequence>MARSIKKGPFVADHLIKKIENLNAKGEKKVIITWSRASTIVPMMIGHTIAVHNGREHLPVFVTDRMVGQKLGEFSPTRTFRGHVKSDKKSRR</sequence>
<evidence type="ECO:0000255" key="1">
    <source>
        <dbReference type="HAMAP-Rule" id="MF_00531"/>
    </source>
</evidence>
<evidence type="ECO:0000305" key="2"/>
<keyword id="KW-0150">Chloroplast</keyword>
<keyword id="KW-0934">Plastid</keyword>
<keyword id="KW-0687">Ribonucleoprotein</keyword>
<keyword id="KW-0689">Ribosomal protein</keyword>
<keyword id="KW-0694">RNA-binding</keyword>
<keyword id="KW-0699">rRNA-binding</keyword>
<gene>
    <name evidence="1" type="primary">rps19</name>
</gene>
<organism>
    <name type="scientific">Chaetosphaeridium globosum</name>
    <name type="common">Charophycean green alga</name>
    <name type="synonym">Herposteiron globosum</name>
    <dbReference type="NCBI Taxonomy" id="96477"/>
    <lineage>
        <taxon>Eukaryota</taxon>
        <taxon>Viridiplantae</taxon>
        <taxon>Streptophyta</taxon>
        <taxon>Coleochaetophyceae</taxon>
        <taxon>Coleochaetales</taxon>
        <taxon>Chaetosphaeridiaceae</taxon>
        <taxon>Chaetosphaeridium</taxon>
    </lineage>
</organism>
<geneLocation type="chloroplast"/>
<protein>
    <recommendedName>
        <fullName evidence="1">Small ribosomal subunit protein uS19c</fullName>
    </recommendedName>
    <alternativeName>
        <fullName evidence="2">30S ribosomal protein S19, chloroplastic</fullName>
    </alternativeName>
</protein>
<feature type="chain" id="PRO_0000129957" description="Small ribosomal subunit protein uS19c">
    <location>
        <begin position="1"/>
        <end position="92"/>
    </location>
</feature>